<organism>
    <name type="scientific">Haemophilus influenzae (strain ATCC 51907 / DSM 11121 / KW20 / Rd)</name>
    <dbReference type="NCBI Taxonomy" id="71421"/>
    <lineage>
        <taxon>Bacteria</taxon>
        <taxon>Pseudomonadati</taxon>
        <taxon>Pseudomonadota</taxon>
        <taxon>Gammaproteobacteria</taxon>
        <taxon>Pasteurellales</taxon>
        <taxon>Pasteurellaceae</taxon>
        <taxon>Haemophilus</taxon>
    </lineage>
</organism>
<name>ILVC_HAEIN</name>
<comment type="function">
    <text evidence="2">Involved in the biosynthesis of branched-chain amino acids (BCAA). Catalyzes an alkyl-migration followed by a ketol-acid reduction of (S)-2-acetolactate (S2AL) to yield (R)-2,3-dihydroxy-isovalerate. In the isomerase reaction, S2AL is rearranged via a Mg-dependent methyl migration to produce 3-hydroxy-3-methyl-2-ketobutyrate (HMKB). In the reductase reaction, this 2-ketoacid undergoes a metal-dependent reduction by NADPH to yield (R)-2,3-dihydroxy-isovalerate.</text>
</comment>
<comment type="catalytic activity">
    <reaction evidence="2">
        <text>(2R)-2,3-dihydroxy-3-methylbutanoate + NADP(+) = (2S)-2-acetolactate + NADPH + H(+)</text>
        <dbReference type="Rhea" id="RHEA:22068"/>
        <dbReference type="ChEBI" id="CHEBI:15378"/>
        <dbReference type="ChEBI" id="CHEBI:49072"/>
        <dbReference type="ChEBI" id="CHEBI:57783"/>
        <dbReference type="ChEBI" id="CHEBI:58349"/>
        <dbReference type="ChEBI" id="CHEBI:58476"/>
        <dbReference type="EC" id="1.1.1.86"/>
    </reaction>
</comment>
<comment type="catalytic activity">
    <reaction evidence="2">
        <text>(2R,3R)-2,3-dihydroxy-3-methylpentanoate + NADP(+) = (S)-2-ethyl-2-hydroxy-3-oxobutanoate + NADPH + H(+)</text>
        <dbReference type="Rhea" id="RHEA:13493"/>
        <dbReference type="ChEBI" id="CHEBI:15378"/>
        <dbReference type="ChEBI" id="CHEBI:49256"/>
        <dbReference type="ChEBI" id="CHEBI:49258"/>
        <dbReference type="ChEBI" id="CHEBI:57783"/>
        <dbReference type="ChEBI" id="CHEBI:58349"/>
        <dbReference type="EC" id="1.1.1.86"/>
    </reaction>
</comment>
<comment type="cofactor">
    <cofactor evidence="2">
        <name>Mg(2+)</name>
        <dbReference type="ChEBI" id="CHEBI:18420"/>
    </cofactor>
    <text evidence="2">Binds 2 magnesium ions per subunit.</text>
</comment>
<comment type="pathway">
    <text evidence="2">Amino-acid biosynthesis; L-isoleucine biosynthesis; L-isoleucine from 2-oxobutanoate: step 2/4.</text>
</comment>
<comment type="pathway">
    <text evidence="2">Amino-acid biosynthesis; L-valine biosynthesis; L-valine from pyruvate: step 2/4.</text>
</comment>
<comment type="similarity">
    <text evidence="2">Belongs to the ketol-acid reductoisomerase family.</text>
</comment>
<keyword id="KW-0028">Amino-acid biosynthesis</keyword>
<keyword id="KW-0100">Branched-chain amino acid biosynthesis</keyword>
<keyword id="KW-0460">Magnesium</keyword>
<keyword id="KW-0479">Metal-binding</keyword>
<keyword id="KW-0521">NADP</keyword>
<keyword id="KW-0560">Oxidoreductase</keyword>
<keyword id="KW-1185">Reference proteome</keyword>
<keyword id="KW-0677">Repeat</keyword>
<reference key="1">
    <citation type="journal article" date="1995" name="Science">
        <title>Whole-genome random sequencing and assembly of Haemophilus influenzae Rd.</title>
        <authorList>
            <person name="Fleischmann R.D."/>
            <person name="Adams M.D."/>
            <person name="White O."/>
            <person name="Clayton R.A."/>
            <person name="Kirkness E.F."/>
            <person name="Kerlavage A.R."/>
            <person name="Bult C.J."/>
            <person name="Tomb J.-F."/>
            <person name="Dougherty B.A."/>
            <person name="Merrick J.M."/>
            <person name="McKenney K."/>
            <person name="Sutton G.G."/>
            <person name="FitzHugh W."/>
            <person name="Fields C.A."/>
            <person name="Gocayne J.D."/>
            <person name="Scott J.D."/>
            <person name="Shirley R."/>
            <person name="Liu L.-I."/>
            <person name="Glodek A."/>
            <person name="Kelley J.M."/>
            <person name="Weidman J.F."/>
            <person name="Phillips C.A."/>
            <person name="Spriggs T."/>
            <person name="Hedblom E."/>
            <person name="Cotton M.D."/>
            <person name="Utterback T.R."/>
            <person name="Hanna M.C."/>
            <person name="Nguyen D.T."/>
            <person name="Saudek D.M."/>
            <person name="Brandon R.C."/>
            <person name="Fine L.D."/>
            <person name="Fritchman J.L."/>
            <person name="Fuhrmann J.L."/>
            <person name="Geoghagen N.S.M."/>
            <person name="Gnehm C.L."/>
            <person name="McDonald L.A."/>
            <person name="Small K.V."/>
            <person name="Fraser C.M."/>
            <person name="Smith H.O."/>
            <person name="Venter J.C."/>
        </authorList>
    </citation>
    <scope>NUCLEOTIDE SEQUENCE [LARGE SCALE GENOMIC DNA]</scope>
    <source>
        <strain>ATCC 51907 / DSM 11121 / KW20 / Rd</strain>
    </source>
</reference>
<protein>
    <recommendedName>
        <fullName evidence="2">Ketol-acid reductoisomerase (NADP(+))</fullName>
        <shortName evidence="2">KARI</shortName>
        <ecNumber evidence="2">1.1.1.86</ecNumber>
    </recommendedName>
    <alternativeName>
        <fullName evidence="2">Acetohydroxy-acid isomeroreductase</fullName>
        <shortName evidence="2">AHIR</shortName>
    </alternativeName>
    <alternativeName>
        <fullName evidence="2">Alpha-keto-beta-hydroxylacyl reductoisomerase</fullName>
    </alternativeName>
    <alternativeName>
        <fullName evidence="2">Ketol-acid reductoisomerase type 2</fullName>
    </alternativeName>
    <alternativeName>
        <fullName evidence="2">Ketol-acid reductoisomerase type II</fullName>
    </alternativeName>
</protein>
<evidence type="ECO:0000250" key="1"/>
<evidence type="ECO:0000255" key="2">
    <source>
        <dbReference type="HAMAP-Rule" id="MF_00435"/>
    </source>
</evidence>
<evidence type="ECO:0000255" key="3">
    <source>
        <dbReference type="PROSITE-ProRule" id="PRU01197"/>
    </source>
</evidence>
<evidence type="ECO:0000255" key="4">
    <source>
        <dbReference type="PROSITE-ProRule" id="PRU01198"/>
    </source>
</evidence>
<feature type="initiator methionine" description="Removed" evidence="1">
    <location>
        <position position="1"/>
    </location>
</feature>
<feature type="chain" id="PRO_0000151314" description="Ketol-acid reductoisomerase (NADP(+))">
    <location>
        <begin position="2"/>
        <end position="492"/>
    </location>
</feature>
<feature type="domain" description="KARI N-terminal Rossmann" evidence="3">
    <location>
        <begin position="14"/>
        <end position="208"/>
    </location>
</feature>
<feature type="domain" description="KARI C-terminal knotted 1" evidence="4">
    <location>
        <begin position="209"/>
        <end position="344"/>
    </location>
</feature>
<feature type="domain" description="KARI C-terminal knotted 2" evidence="4">
    <location>
        <begin position="345"/>
        <end position="485"/>
    </location>
</feature>
<feature type="active site" evidence="2">
    <location>
        <position position="132"/>
    </location>
</feature>
<feature type="binding site" evidence="2">
    <location>
        <begin position="45"/>
        <end position="48"/>
    </location>
    <ligand>
        <name>NADP(+)</name>
        <dbReference type="ChEBI" id="CHEBI:58349"/>
    </ligand>
</feature>
<feature type="binding site" evidence="2">
    <location>
        <position position="68"/>
    </location>
    <ligand>
        <name>NADP(+)</name>
        <dbReference type="ChEBI" id="CHEBI:58349"/>
    </ligand>
</feature>
<feature type="binding site" evidence="2">
    <location>
        <position position="76"/>
    </location>
    <ligand>
        <name>NADP(+)</name>
        <dbReference type="ChEBI" id="CHEBI:58349"/>
    </ligand>
</feature>
<feature type="binding site" evidence="2">
    <location>
        <position position="78"/>
    </location>
    <ligand>
        <name>NADP(+)</name>
        <dbReference type="ChEBI" id="CHEBI:58349"/>
    </ligand>
</feature>
<feature type="binding site" evidence="2">
    <location>
        <begin position="108"/>
        <end position="110"/>
    </location>
    <ligand>
        <name>NADP(+)</name>
        <dbReference type="ChEBI" id="CHEBI:58349"/>
    </ligand>
</feature>
<feature type="binding site" evidence="2">
    <location>
        <position position="158"/>
    </location>
    <ligand>
        <name>NADP(+)</name>
        <dbReference type="ChEBI" id="CHEBI:58349"/>
    </ligand>
</feature>
<feature type="binding site" evidence="2">
    <location>
        <position position="217"/>
    </location>
    <ligand>
        <name>Mg(2+)</name>
        <dbReference type="ChEBI" id="CHEBI:18420"/>
        <label>1</label>
    </ligand>
</feature>
<feature type="binding site" evidence="2">
    <location>
        <position position="217"/>
    </location>
    <ligand>
        <name>Mg(2+)</name>
        <dbReference type="ChEBI" id="CHEBI:18420"/>
        <label>2</label>
    </ligand>
</feature>
<feature type="binding site" evidence="2">
    <location>
        <position position="221"/>
    </location>
    <ligand>
        <name>Mg(2+)</name>
        <dbReference type="ChEBI" id="CHEBI:18420"/>
        <label>1</label>
    </ligand>
</feature>
<feature type="binding site" evidence="2">
    <location>
        <position position="389"/>
    </location>
    <ligand>
        <name>Mg(2+)</name>
        <dbReference type="ChEBI" id="CHEBI:18420"/>
        <label>2</label>
    </ligand>
</feature>
<feature type="binding site" evidence="2">
    <location>
        <position position="393"/>
    </location>
    <ligand>
        <name>Mg(2+)</name>
        <dbReference type="ChEBI" id="CHEBI:18420"/>
        <label>2</label>
    </ligand>
</feature>
<feature type="binding site" evidence="2">
    <location>
        <position position="414"/>
    </location>
    <ligand>
        <name>substrate</name>
    </ligand>
</feature>
<accession>P44822</accession>
<sequence>MANYFNTLNLRQKLDQLGRCRFMDREEFADEANFLKGKKIVIVGCGAQGLNQGLNMRDSGLDISYALRPEAIAEKRASFQRATENGFKVGTYEELIPTADLVVNLTPDKQHSKVVADVMPLMKKDSAFGYSHGFNIVEVGEEIRKDITVVMVAPKCPGTEVREEYKRGFGVPTLIAVHPENDPKGEGMAIAKAWAAATGGHKAGVLESSFVAEVKSDLMGEQTILCGMLQAGSIVCYDKLVADGKDPAYAGKLIQYGWETITEALKQGGITLMMDRLSNSAKLRAFELAEQIKESLGFLYYKHMDDIISGHFSATMMADWANGDKDLFAWREATGKTAFENAPKYDGKISEQEYFDNGVLMIAMVKAGVELAFDAMVASGIYEESAYYESLHELPLIANTIARKRLYEMNVVISDTAEYGNYLFSNVATPILAKEIIPNLQKGDLGEPTPAVEVDNITLRDVNDAIRNHPVELIGQELRGYMTDMKRIAVAG</sequence>
<proteinExistence type="inferred from homology"/>
<gene>
    <name evidence="2" type="primary">ilvC</name>
    <name type="ordered locus">HI_0682</name>
</gene>
<dbReference type="EC" id="1.1.1.86" evidence="2"/>
<dbReference type="EMBL" id="L42023">
    <property type="protein sequence ID" value="AAC22342.1"/>
    <property type="molecule type" value="Genomic_DNA"/>
</dbReference>
<dbReference type="PIR" id="B64086">
    <property type="entry name" value="B64086"/>
</dbReference>
<dbReference type="RefSeq" id="NP_438842.1">
    <property type="nucleotide sequence ID" value="NC_000907.1"/>
</dbReference>
<dbReference type="SMR" id="P44822"/>
<dbReference type="STRING" id="71421.HI_0682"/>
<dbReference type="EnsemblBacteria" id="AAC22342">
    <property type="protein sequence ID" value="AAC22342"/>
    <property type="gene ID" value="HI_0682"/>
</dbReference>
<dbReference type="KEGG" id="hin:HI_0682"/>
<dbReference type="PATRIC" id="fig|71421.8.peg.713"/>
<dbReference type="eggNOG" id="COG0059">
    <property type="taxonomic scope" value="Bacteria"/>
</dbReference>
<dbReference type="HOGENOM" id="CLU_551905_0_0_6"/>
<dbReference type="OrthoDB" id="9804088at2"/>
<dbReference type="PhylomeDB" id="P44822"/>
<dbReference type="BioCyc" id="HINF71421:G1GJ1-717-MONOMER"/>
<dbReference type="UniPathway" id="UPA00047">
    <property type="reaction ID" value="UER00056"/>
</dbReference>
<dbReference type="UniPathway" id="UPA00049">
    <property type="reaction ID" value="UER00060"/>
</dbReference>
<dbReference type="Proteomes" id="UP000000579">
    <property type="component" value="Chromosome"/>
</dbReference>
<dbReference type="GO" id="GO:0005829">
    <property type="term" value="C:cytosol"/>
    <property type="evidence" value="ECO:0000318"/>
    <property type="project" value="GO_Central"/>
</dbReference>
<dbReference type="GO" id="GO:0004455">
    <property type="term" value="F:ketol-acid reductoisomerase activity"/>
    <property type="evidence" value="ECO:0000318"/>
    <property type="project" value="GO_Central"/>
</dbReference>
<dbReference type="GO" id="GO:0000287">
    <property type="term" value="F:magnesium ion binding"/>
    <property type="evidence" value="ECO:0007669"/>
    <property type="project" value="UniProtKB-UniRule"/>
</dbReference>
<dbReference type="GO" id="GO:0009097">
    <property type="term" value="P:isoleucine biosynthetic process"/>
    <property type="evidence" value="ECO:0000318"/>
    <property type="project" value="GO_Central"/>
</dbReference>
<dbReference type="GO" id="GO:0009099">
    <property type="term" value="P:L-valine biosynthetic process"/>
    <property type="evidence" value="ECO:0000318"/>
    <property type="project" value="GO_Central"/>
</dbReference>
<dbReference type="FunFam" id="1.10.1040.10:FF:000007">
    <property type="entry name" value="Ketol-acid reductoisomerase (NADP(+))"/>
    <property type="match status" value="1"/>
</dbReference>
<dbReference type="FunFam" id="3.40.50.720:FF:000043">
    <property type="entry name" value="Ketol-acid reductoisomerase (NADP(+))"/>
    <property type="match status" value="1"/>
</dbReference>
<dbReference type="Gene3D" id="1.10.1040.10">
    <property type="entry name" value="N-(1-d-carboxylethyl)-l-norvaline Dehydrogenase, domain 2"/>
    <property type="match status" value="1"/>
</dbReference>
<dbReference type="Gene3D" id="3.40.50.720">
    <property type="entry name" value="NAD(P)-binding Rossmann-like Domain"/>
    <property type="match status" value="1"/>
</dbReference>
<dbReference type="HAMAP" id="MF_00435">
    <property type="entry name" value="IlvC"/>
    <property type="match status" value="1"/>
</dbReference>
<dbReference type="InterPro" id="IPR008927">
    <property type="entry name" value="6-PGluconate_DH-like_C_sf"/>
</dbReference>
<dbReference type="InterPro" id="IPR013328">
    <property type="entry name" value="6PGD_dom2"/>
</dbReference>
<dbReference type="InterPro" id="IPR013023">
    <property type="entry name" value="KARI"/>
</dbReference>
<dbReference type="InterPro" id="IPR000506">
    <property type="entry name" value="KARI_C"/>
</dbReference>
<dbReference type="InterPro" id="IPR013116">
    <property type="entry name" value="KARI_N"/>
</dbReference>
<dbReference type="InterPro" id="IPR036291">
    <property type="entry name" value="NAD(P)-bd_dom_sf"/>
</dbReference>
<dbReference type="NCBIfam" id="TIGR00465">
    <property type="entry name" value="ilvC"/>
    <property type="match status" value="1"/>
</dbReference>
<dbReference type="NCBIfam" id="NF003557">
    <property type="entry name" value="PRK05225.1"/>
    <property type="match status" value="1"/>
</dbReference>
<dbReference type="PANTHER" id="PTHR21371">
    <property type="entry name" value="KETOL-ACID REDUCTOISOMERASE, MITOCHONDRIAL"/>
    <property type="match status" value="1"/>
</dbReference>
<dbReference type="PANTHER" id="PTHR21371:SF1">
    <property type="entry name" value="KETOL-ACID REDUCTOISOMERASE, MITOCHONDRIAL"/>
    <property type="match status" value="1"/>
</dbReference>
<dbReference type="Pfam" id="PF01450">
    <property type="entry name" value="KARI_C"/>
    <property type="match status" value="2"/>
</dbReference>
<dbReference type="Pfam" id="PF07991">
    <property type="entry name" value="KARI_N"/>
    <property type="match status" value="1"/>
</dbReference>
<dbReference type="SUPFAM" id="SSF48179">
    <property type="entry name" value="6-phosphogluconate dehydrogenase C-terminal domain-like"/>
    <property type="match status" value="2"/>
</dbReference>
<dbReference type="SUPFAM" id="SSF51735">
    <property type="entry name" value="NAD(P)-binding Rossmann-fold domains"/>
    <property type="match status" value="1"/>
</dbReference>
<dbReference type="PROSITE" id="PS51851">
    <property type="entry name" value="KARI_C"/>
    <property type="match status" value="2"/>
</dbReference>
<dbReference type="PROSITE" id="PS51850">
    <property type="entry name" value="KARI_N"/>
    <property type="match status" value="1"/>
</dbReference>